<gene>
    <name evidence="1" type="primary">glpE</name>
    <name type="ordered locus">VV0117</name>
</gene>
<proteinExistence type="inferred from homology"/>
<feature type="chain" id="PRO_0000200570" description="Thiosulfate sulfurtransferase GlpE">
    <location>
        <begin position="1"/>
        <end position="106"/>
    </location>
</feature>
<feature type="domain" description="Rhodanese" evidence="1">
    <location>
        <begin position="17"/>
        <end position="105"/>
    </location>
</feature>
<feature type="active site" description="Cysteine persulfide intermediate" evidence="1">
    <location>
        <position position="65"/>
    </location>
</feature>
<reference key="1">
    <citation type="journal article" date="2003" name="Genome Res.">
        <title>Comparative genome analysis of Vibrio vulnificus, a marine pathogen.</title>
        <authorList>
            <person name="Chen C.-Y."/>
            <person name="Wu K.-M."/>
            <person name="Chang Y.-C."/>
            <person name="Chang C.-H."/>
            <person name="Tsai H.-C."/>
            <person name="Liao T.-L."/>
            <person name="Liu Y.-M."/>
            <person name="Chen H.-J."/>
            <person name="Shen A.B.-T."/>
            <person name="Li J.-C."/>
            <person name="Su T.-L."/>
            <person name="Shao C.-P."/>
            <person name="Lee C.-T."/>
            <person name="Hor L.-I."/>
            <person name="Tsai S.-F."/>
        </authorList>
    </citation>
    <scope>NUCLEOTIDE SEQUENCE [LARGE SCALE GENOMIC DNA]</scope>
    <source>
        <strain>YJ016</strain>
    </source>
</reference>
<evidence type="ECO:0000255" key="1">
    <source>
        <dbReference type="HAMAP-Rule" id="MF_01009"/>
    </source>
</evidence>
<evidence type="ECO:0000305" key="2"/>
<organism>
    <name type="scientific">Vibrio vulnificus (strain YJ016)</name>
    <dbReference type="NCBI Taxonomy" id="196600"/>
    <lineage>
        <taxon>Bacteria</taxon>
        <taxon>Pseudomonadati</taxon>
        <taxon>Pseudomonadota</taxon>
        <taxon>Gammaproteobacteria</taxon>
        <taxon>Vibrionales</taxon>
        <taxon>Vibrionaceae</taxon>
        <taxon>Vibrio</taxon>
    </lineage>
</organism>
<accession>Q7MQ91</accession>
<name>GLPE_VIBVY</name>
<comment type="function">
    <text evidence="1">Transferase that catalyzes the transfer of sulfur from thiosulfate to thiophilic acceptors such as cyanide or dithiols. May function in a CysM-independent thiosulfate assimilation pathway by catalyzing the conversion of thiosulfate to sulfite, which can then be used for L-cysteine biosynthesis.</text>
</comment>
<comment type="catalytic activity">
    <reaction evidence="1">
        <text>thiosulfate + hydrogen cyanide = thiocyanate + sulfite + 2 H(+)</text>
        <dbReference type="Rhea" id="RHEA:16881"/>
        <dbReference type="ChEBI" id="CHEBI:15378"/>
        <dbReference type="ChEBI" id="CHEBI:17359"/>
        <dbReference type="ChEBI" id="CHEBI:18022"/>
        <dbReference type="ChEBI" id="CHEBI:18407"/>
        <dbReference type="ChEBI" id="CHEBI:33542"/>
        <dbReference type="EC" id="2.8.1.1"/>
    </reaction>
</comment>
<comment type="catalytic activity">
    <reaction evidence="1">
        <text>thiosulfate + [thioredoxin]-dithiol = [thioredoxin]-disulfide + hydrogen sulfide + sulfite + 2 H(+)</text>
        <dbReference type="Rhea" id="RHEA:83859"/>
        <dbReference type="Rhea" id="RHEA-COMP:10698"/>
        <dbReference type="Rhea" id="RHEA-COMP:10700"/>
        <dbReference type="ChEBI" id="CHEBI:15378"/>
        <dbReference type="ChEBI" id="CHEBI:17359"/>
        <dbReference type="ChEBI" id="CHEBI:29919"/>
        <dbReference type="ChEBI" id="CHEBI:29950"/>
        <dbReference type="ChEBI" id="CHEBI:33542"/>
        <dbReference type="ChEBI" id="CHEBI:50058"/>
    </reaction>
</comment>
<comment type="subcellular location">
    <subcellularLocation>
        <location evidence="1">Cytoplasm</location>
    </subcellularLocation>
</comment>
<comment type="similarity">
    <text evidence="1">Belongs to the GlpE family.</text>
</comment>
<comment type="sequence caution" evidence="2">
    <conflict type="erroneous initiation">
        <sequence resource="EMBL-CDS" id="BAC92881"/>
    </conflict>
</comment>
<keyword id="KW-0963">Cytoplasm</keyword>
<keyword id="KW-0808">Transferase</keyword>
<sequence>MEQFKHIDVQGAHALISRGEARLVDIRDPQSFAVAHAQSAFHLTNDSIVNFMQQVEFEQPVLVMCYHGISSQGAAQYLVNQGFEEVYSVDGGFEAWHRASLPVEAS</sequence>
<protein>
    <recommendedName>
        <fullName evidence="1">Thiosulfate sulfurtransferase GlpE</fullName>
        <ecNumber evidence="1">2.8.1.1</ecNumber>
    </recommendedName>
</protein>
<dbReference type="EC" id="2.8.1.1" evidence="1"/>
<dbReference type="EMBL" id="BA000037">
    <property type="protein sequence ID" value="BAC92881.1"/>
    <property type="status" value="ALT_INIT"/>
    <property type="molecule type" value="Genomic_DNA"/>
</dbReference>
<dbReference type="RefSeq" id="WP_011079170.1">
    <property type="nucleotide sequence ID" value="NC_005139.1"/>
</dbReference>
<dbReference type="SMR" id="Q7MQ91"/>
<dbReference type="STRING" id="672.VV93_v1c01050"/>
<dbReference type="GeneID" id="93895434"/>
<dbReference type="KEGG" id="vvy:VV0117"/>
<dbReference type="eggNOG" id="COG0607">
    <property type="taxonomic scope" value="Bacteria"/>
</dbReference>
<dbReference type="HOGENOM" id="CLU_089574_14_0_6"/>
<dbReference type="Proteomes" id="UP000002675">
    <property type="component" value="Chromosome I"/>
</dbReference>
<dbReference type="GO" id="GO:0005737">
    <property type="term" value="C:cytoplasm"/>
    <property type="evidence" value="ECO:0007669"/>
    <property type="project" value="UniProtKB-SubCell"/>
</dbReference>
<dbReference type="GO" id="GO:0004792">
    <property type="term" value="F:thiosulfate-cyanide sulfurtransferase activity"/>
    <property type="evidence" value="ECO:0007669"/>
    <property type="project" value="UniProtKB-UniRule"/>
</dbReference>
<dbReference type="GO" id="GO:0006071">
    <property type="term" value="P:glycerol metabolic process"/>
    <property type="evidence" value="ECO:0007669"/>
    <property type="project" value="UniProtKB-UniRule"/>
</dbReference>
<dbReference type="CDD" id="cd01444">
    <property type="entry name" value="GlpE_ST"/>
    <property type="match status" value="1"/>
</dbReference>
<dbReference type="Gene3D" id="3.40.250.10">
    <property type="entry name" value="Rhodanese-like domain"/>
    <property type="match status" value="1"/>
</dbReference>
<dbReference type="HAMAP" id="MF_01009">
    <property type="entry name" value="Thiosulf_sulfurtr"/>
    <property type="match status" value="1"/>
</dbReference>
<dbReference type="InterPro" id="IPR050229">
    <property type="entry name" value="GlpE_sulfurtransferase"/>
</dbReference>
<dbReference type="InterPro" id="IPR001763">
    <property type="entry name" value="Rhodanese-like_dom"/>
</dbReference>
<dbReference type="InterPro" id="IPR036873">
    <property type="entry name" value="Rhodanese-like_dom_sf"/>
</dbReference>
<dbReference type="InterPro" id="IPR023695">
    <property type="entry name" value="Thiosulf_sulfurTrfase"/>
</dbReference>
<dbReference type="NCBIfam" id="NF001195">
    <property type="entry name" value="PRK00162.1"/>
    <property type="match status" value="1"/>
</dbReference>
<dbReference type="PANTHER" id="PTHR43031">
    <property type="entry name" value="FAD-DEPENDENT OXIDOREDUCTASE"/>
    <property type="match status" value="1"/>
</dbReference>
<dbReference type="PANTHER" id="PTHR43031:SF6">
    <property type="entry name" value="THIOSULFATE SULFURTRANSFERASE GLPE"/>
    <property type="match status" value="1"/>
</dbReference>
<dbReference type="Pfam" id="PF00581">
    <property type="entry name" value="Rhodanese"/>
    <property type="match status" value="1"/>
</dbReference>
<dbReference type="SMART" id="SM00450">
    <property type="entry name" value="RHOD"/>
    <property type="match status" value="1"/>
</dbReference>
<dbReference type="SUPFAM" id="SSF52821">
    <property type="entry name" value="Rhodanese/Cell cycle control phosphatase"/>
    <property type="match status" value="1"/>
</dbReference>
<dbReference type="PROSITE" id="PS50206">
    <property type="entry name" value="RHODANESE_3"/>
    <property type="match status" value="1"/>
</dbReference>